<protein>
    <recommendedName>
        <fullName evidence="2">Translation initiation factor IF-2</fullName>
    </recommendedName>
</protein>
<dbReference type="EMBL" id="CP000488">
    <property type="protein sequence ID" value="ABL01856.1"/>
    <property type="molecule type" value="Genomic_DNA"/>
</dbReference>
<dbReference type="RefSeq" id="WP_011737482.1">
    <property type="nucleotide sequence ID" value="NC_008610.1"/>
</dbReference>
<dbReference type="SMR" id="A1AV99"/>
<dbReference type="STRING" id="413404.Rmag_0054"/>
<dbReference type="KEGG" id="rma:Rmag_0054"/>
<dbReference type="eggNOG" id="COG0532">
    <property type="taxonomic scope" value="Bacteria"/>
</dbReference>
<dbReference type="HOGENOM" id="CLU_006301_6_1_6"/>
<dbReference type="OrthoDB" id="9811804at2"/>
<dbReference type="Proteomes" id="UP000002587">
    <property type="component" value="Chromosome"/>
</dbReference>
<dbReference type="GO" id="GO:0005829">
    <property type="term" value="C:cytosol"/>
    <property type="evidence" value="ECO:0007669"/>
    <property type="project" value="TreeGrafter"/>
</dbReference>
<dbReference type="GO" id="GO:0005525">
    <property type="term" value="F:GTP binding"/>
    <property type="evidence" value="ECO:0007669"/>
    <property type="project" value="UniProtKB-KW"/>
</dbReference>
<dbReference type="GO" id="GO:0003924">
    <property type="term" value="F:GTPase activity"/>
    <property type="evidence" value="ECO:0007669"/>
    <property type="project" value="UniProtKB-UniRule"/>
</dbReference>
<dbReference type="GO" id="GO:0003743">
    <property type="term" value="F:translation initiation factor activity"/>
    <property type="evidence" value="ECO:0007669"/>
    <property type="project" value="UniProtKB-UniRule"/>
</dbReference>
<dbReference type="CDD" id="cd01887">
    <property type="entry name" value="IF2_eIF5B"/>
    <property type="match status" value="1"/>
</dbReference>
<dbReference type="CDD" id="cd03702">
    <property type="entry name" value="IF2_mtIF2_II"/>
    <property type="match status" value="1"/>
</dbReference>
<dbReference type="CDD" id="cd03692">
    <property type="entry name" value="mtIF2_IVc"/>
    <property type="match status" value="1"/>
</dbReference>
<dbReference type="FunFam" id="2.40.30.10:FF:000007">
    <property type="entry name" value="Translation initiation factor IF-2"/>
    <property type="match status" value="1"/>
</dbReference>
<dbReference type="FunFam" id="2.40.30.10:FF:000008">
    <property type="entry name" value="Translation initiation factor IF-2"/>
    <property type="match status" value="1"/>
</dbReference>
<dbReference type="FunFam" id="3.40.50.10050:FF:000001">
    <property type="entry name" value="Translation initiation factor IF-2"/>
    <property type="match status" value="1"/>
</dbReference>
<dbReference type="FunFam" id="3.40.50.300:FF:000019">
    <property type="entry name" value="Translation initiation factor IF-2"/>
    <property type="match status" value="1"/>
</dbReference>
<dbReference type="Gene3D" id="3.40.50.300">
    <property type="entry name" value="P-loop containing nucleotide triphosphate hydrolases"/>
    <property type="match status" value="1"/>
</dbReference>
<dbReference type="Gene3D" id="2.40.30.10">
    <property type="entry name" value="Translation factors"/>
    <property type="match status" value="2"/>
</dbReference>
<dbReference type="Gene3D" id="3.40.50.10050">
    <property type="entry name" value="Translation initiation factor IF- 2, domain 3"/>
    <property type="match status" value="1"/>
</dbReference>
<dbReference type="HAMAP" id="MF_00100_B">
    <property type="entry name" value="IF_2_B"/>
    <property type="match status" value="1"/>
</dbReference>
<dbReference type="InterPro" id="IPR053905">
    <property type="entry name" value="EF-G-like_DII"/>
</dbReference>
<dbReference type="InterPro" id="IPR044145">
    <property type="entry name" value="IF2_II"/>
</dbReference>
<dbReference type="InterPro" id="IPR006847">
    <property type="entry name" value="IF2_N"/>
</dbReference>
<dbReference type="InterPro" id="IPR027417">
    <property type="entry name" value="P-loop_NTPase"/>
</dbReference>
<dbReference type="InterPro" id="IPR005225">
    <property type="entry name" value="Small_GTP-bd"/>
</dbReference>
<dbReference type="InterPro" id="IPR000795">
    <property type="entry name" value="T_Tr_GTP-bd_dom"/>
</dbReference>
<dbReference type="InterPro" id="IPR000178">
    <property type="entry name" value="TF_IF2_bacterial-like"/>
</dbReference>
<dbReference type="InterPro" id="IPR015760">
    <property type="entry name" value="TIF_IF2"/>
</dbReference>
<dbReference type="InterPro" id="IPR023115">
    <property type="entry name" value="TIF_IF2_dom3"/>
</dbReference>
<dbReference type="InterPro" id="IPR036925">
    <property type="entry name" value="TIF_IF2_dom3_sf"/>
</dbReference>
<dbReference type="InterPro" id="IPR009000">
    <property type="entry name" value="Transl_B-barrel_sf"/>
</dbReference>
<dbReference type="NCBIfam" id="TIGR00487">
    <property type="entry name" value="IF-2"/>
    <property type="match status" value="1"/>
</dbReference>
<dbReference type="NCBIfam" id="TIGR00231">
    <property type="entry name" value="small_GTP"/>
    <property type="match status" value="1"/>
</dbReference>
<dbReference type="PANTHER" id="PTHR43381:SF5">
    <property type="entry name" value="TR-TYPE G DOMAIN-CONTAINING PROTEIN"/>
    <property type="match status" value="1"/>
</dbReference>
<dbReference type="PANTHER" id="PTHR43381">
    <property type="entry name" value="TRANSLATION INITIATION FACTOR IF-2-RELATED"/>
    <property type="match status" value="1"/>
</dbReference>
<dbReference type="Pfam" id="PF22042">
    <property type="entry name" value="EF-G_D2"/>
    <property type="match status" value="1"/>
</dbReference>
<dbReference type="Pfam" id="PF00009">
    <property type="entry name" value="GTP_EFTU"/>
    <property type="match status" value="1"/>
</dbReference>
<dbReference type="Pfam" id="PF11987">
    <property type="entry name" value="IF-2"/>
    <property type="match status" value="1"/>
</dbReference>
<dbReference type="Pfam" id="PF04760">
    <property type="entry name" value="IF2_N"/>
    <property type="match status" value="1"/>
</dbReference>
<dbReference type="SUPFAM" id="SSF52156">
    <property type="entry name" value="Initiation factor IF2/eIF5b, domain 3"/>
    <property type="match status" value="1"/>
</dbReference>
<dbReference type="SUPFAM" id="SSF52540">
    <property type="entry name" value="P-loop containing nucleoside triphosphate hydrolases"/>
    <property type="match status" value="1"/>
</dbReference>
<dbReference type="SUPFAM" id="SSF50447">
    <property type="entry name" value="Translation proteins"/>
    <property type="match status" value="2"/>
</dbReference>
<dbReference type="PROSITE" id="PS51722">
    <property type="entry name" value="G_TR_2"/>
    <property type="match status" value="1"/>
</dbReference>
<dbReference type="PROSITE" id="PS01176">
    <property type="entry name" value="IF2"/>
    <property type="match status" value="1"/>
</dbReference>
<feature type="chain" id="PRO_0000335507" description="Translation initiation factor IF-2">
    <location>
        <begin position="1"/>
        <end position="815"/>
    </location>
</feature>
<feature type="domain" description="tr-type G">
    <location>
        <begin position="315"/>
        <end position="482"/>
    </location>
</feature>
<feature type="region of interest" description="G1" evidence="1">
    <location>
        <begin position="324"/>
        <end position="331"/>
    </location>
</feature>
<feature type="region of interest" description="G2" evidence="1">
    <location>
        <begin position="349"/>
        <end position="353"/>
    </location>
</feature>
<feature type="region of interest" description="G3" evidence="1">
    <location>
        <begin position="370"/>
        <end position="373"/>
    </location>
</feature>
<feature type="region of interest" description="G4" evidence="1">
    <location>
        <begin position="424"/>
        <end position="427"/>
    </location>
</feature>
<feature type="region of interest" description="G5" evidence="1">
    <location>
        <begin position="460"/>
        <end position="462"/>
    </location>
</feature>
<feature type="binding site" evidence="2">
    <location>
        <begin position="324"/>
        <end position="331"/>
    </location>
    <ligand>
        <name>GTP</name>
        <dbReference type="ChEBI" id="CHEBI:37565"/>
    </ligand>
</feature>
<feature type="binding site" evidence="2">
    <location>
        <begin position="370"/>
        <end position="374"/>
    </location>
    <ligand>
        <name>GTP</name>
        <dbReference type="ChEBI" id="CHEBI:37565"/>
    </ligand>
</feature>
<feature type="binding site" evidence="2">
    <location>
        <begin position="424"/>
        <end position="427"/>
    </location>
    <ligand>
        <name>GTP</name>
        <dbReference type="ChEBI" id="CHEBI:37565"/>
    </ligand>
</feature>
<organism>
    <name type="scientific">Ruthia magnifica subsp. Calyptogena magnifica</name>
    <dbReference type="NCBI Taxonomy" id="413404"/>
    <lineage>
        <taxon>Bacteria</taxon>
        <taxon>Pseudomonadati</taxon>
        <taxon>Pseudomonadota</taxon>
        <taxon>Gammaproteobacteria</taxon>
        <taxon>Candidatus Pseudothioglobaceae</taxon>
        <taxon>Candidatus Ruthturnera</taxon>
    </lineage>
</organism>
<keyword id="KW-0963">Cytoplasm</keyword>
<keyword id="KW-0342">GTP-binding</keyword>
<keyword id="KW-0396">Initiation factor</keyword>
<keyword id="KW-0547">Nucleotide-binding</keyword>
<keyword id="KW-0648">Protein biosynthesis</keyword>
<comment type="function">
    <text evidence="2">One of the essential components for the initiation of protein synthesis. Protects formylmethionyl-tRNA from spontaneous hydrolysis and promotes its binding to the 30S ribosomal subunits. Also involved in the hydrolysis of GTP during the formation of the 70S ribosomal complex.</text>
</comment>
<comment type="subcellular location">
    <subcellularLocation>
        <location evidence="2">Cytoplasm</location>
    </subcellularLocation>
</comment>
<comment type="similarity">
    <text evidence="2">Belongs to the TRAFAC class translation factor GTPase superfamily. Classic translation factor GTPase family. IF-2 subfamily.</text>
</comment>
<evidence type="ECO:0000250" key="1"/>
<evidence type="ECO:0000255" key="2">
    <source>
        <dbReference type="HAMAP-Rule" id="MF_00100"/>
    </source>
</evidence>
<accession>A1AV99</accession>
<sequence>MAHTVQTLSKLLKKTPDEVITILANAGVDGKNSDSAISAEERKILMSSLSKRSSSKSSMFSFSKTGIKSSANSASGAKVQVKKKRLTKSATATDEQPEIAVNEVAQAVQVALDAGRDADKKLLAQDAKRLEMVRLQKTQAEVLKAQKKTVKQAQAQEIEKKAEKPKMIDKFKEDKKPKRLRNTLNGNNTRRQLHVARHNPNRKLKKKDRTRLSQKVQEEQAQHAFQKPIEKVVHEIAIAENIKVTELAQKMATKAGEVLKVLMGMGVMATLNDVIDQDTAMLVVEEMGHKSIASVEETVEDVLIEQLKSSGNEKARPPVVTIMGHVDHGKTSLLDYIRQAKVTHGEAGGITQHIGAYQVQSNGNTITFIDTPGHAAFSKMRSRSANATDIVILVVAADDGVMPQTIESIKHVQTAGVPMIVAINKIDKEGIDIDKIKQVLSTHNVISEDWGGDVMMIPVSAYTGEGVDALLDAISLTAEVLEFSAVIKALARGTVLEARLEKGRGKVTTILVQSGTLNKGDIMIAGFEYGKVKQIVDDKGKVLKSATPSMPVEVLGLSGVPNSGDEVLVVDSERKAREVADFRKAKNREAQLQKQQASKMENFLMKMEESNVSTVNVLLKADVRGSAQALIEALEGLSTDEAKVKVVSSGVGGINNTDITLAATSNALVLGFNVRADAVARKTADNEGVRIEYYSIIYNLIDDVKTIMSGLLSPELSENIIGIASVKSVFRSQKMGDIAGCMVEEGVVRRDSLIRVLRDSVVIFEGWLESLRRFKDNVNEVKSGTECGIGVLNYTDIQPGDQIEVFERIERIRTL</sequence>
<reference key="1">
    <citation type="journal article" date="2007" name="Science">
        <title>The Calyptogena magnifica chemoautotrophic symbiont genome.</title>
        <authorList>
            <person name="Newton I.L.G."/>
            <person name="Woyke T."/>
            <person name="Auchtung T.A."/>
            <person name="Dilly G.F."/>
            <person name="Dutton R.J."/>
            <person name="Fisher M.C."/>
            <person name="Fontanez K.M."/>
            <person name="Lau E."/>
            <person name="Stewart F.J."/>
            <person name="Richardson P.M."/>
            <person name="Barry K.W."/>
            <person name="Saunders E."/>
            <person name="Detter J.C."/>
            <person name="Wu D."/>
            <person name="Eisen J.A."/>
            <person name="Cavanaugh C.M."/>
        </authorList>
    </citation>
    <scope>NUCLEOTIDE SEQUENCE [LARGE SCALE GENOMIC DNA]</scope>
</reference>
<name>IF2_RUTMC</name>
<gene>
    <name evidence="2" type="primary">infB</name>
    <name type="ordered locus">Rmag_0054</name>
</gene>
<proteinExistence type="inferred from homology"/>